<reference key="1">
    <citation type="journal article" date="2004" name="Genomics">
        <title>C2360, a nuclear protein expressed in human proliferative cytotrophoblasts, is a representative member of a novel protein family with a conserved coiled coil-helix-coiled coil-helix domain.</title>
        <authorList>
            <person name="Westerman B.A."/>
            <person name="Poutsma A."/>
            <person name="Steegers E.A.P."/>
            <person name="Oudejans C.B.M."/>
        </authorList>
    </citation>
    <scope>NUCLEOTIDE SEQUENCE [MRNA]</scope>
    <scope>SUBCELLULAR LOCATION</scope>
    <source>
        <tissue>Placenta</tissue>
    </source>
</reference>
<reference key="2">
    <citation type="journal article" date="2004" name="Genome Res.">
        <title>The status, quality, and expansion of the NIH full-length cDNA project: the Mammalian Gene Collection (MGC).</title>
        <authorList>
            <consortium name="The MGC Project Team"/>
        </authorList>
    </citation>
    <scope>NUCLEOTIDE SEQUENCE [LARGE SCALE MRNA]</scope>
    <source>
        <tissue>Duodenum</tissue>
        <tissue>Skin</tissue>
    </source>
</reference>
<reference key="3">
    <citation type="journal article" date="2011" name="BMC Syst. Biol.">
        <title>Initial characterization of the human central proteome.</title>
        <authorList>
            <person name="Burkard T.R."/>
            <person name="Planyavsky M."/>
            <person name="Kaupe I."/>
            <person name="Breitwieser F.P."/>
            <person name="Buerckstuemmer T."/>
            <person name="Bennett K.L."/>
            <person name="Superti-Furga G."/>
            <person name="Colinge J."/>
        </authorList>
    </citation>
    <scope>IDENTIFICATION BY MASS SPECTROMETRY [LARGE SCALE ANALYSIS]</scope>
</reference>
<reference key="4">
    <citation type="journal article" date="2013" name="Front. Physiol.">
        <title>Identification and characterization of CHCHD1, AURKAIP1, and CRIF1 as new members of the mammalian mitochondrial ribosome.</title>
        <authorList>
            <person name="Koc E.C."/>
            <person name="Cimen H."/>
            <person name="Kumcuoglu B."/>
            <person name="Abu N."/>
            <person name="Akpinar G."/>
            <person name="Haque M.E."/>
            <person name="Spremulli L.L."/>
            <person name="Koc H."/>
        </authorList>
    </citation>
    <scope>SUBUNIT</scope>
    <scope>SUBCELLULAR LOCATION</scope>
</reference>
<reference key="5">
    <citation type="journal article" date="2015" name="Proteomics">
        <title>N-terminome analysis of the human mitochondrial proteome.</title>
        <authorList>
            <person name="Vaca Jacome A.S."/>
            <person name="Rabilloud T."/>
            <person name="Schaeffer-Reiss C."/>
            <person name="Rompais M."/>
            <person name="Ayoub D."/>
            <person name="Lane L."/>
            <person name="Bairoch A."/>
            <person name="Van Dorsselaer A."/>
            <person name="Carapito C."/>
        </authorList>
    </citation>
    <scope>IDENTIFICATION BY MASS SPECTROMETRY [LARGE SCALE ANALYSIS]</scope>
</reference>
<reference key="6">
    <citation type="journal article" date="2015" name="Science">
        <title>Ribosome. The structure of the human mitochondrial ribosome.</title>
        <authorList>
            <person name="Amunts A."/>
            <person name="Brown A."/>
            <person name="Toots J."/>
            <person name="Scheres S.H."/>
            <person name="Ramakrishnan V."/>
        </authorList>
    </citation>
    <scope>STRUCTURE BY ELECTRON MICROSCOPY (3.50 ANGSTROMS)</scope>
    <scope>SUBUNIT</scope>
</reference>
<proteinExistence type="evidence at protein level"/>
<keyword id="KW-0002">3D-structure</keyword>
<keyword id="KW-1015">Disulfide bond</keyword>
<keyword id="KW-0496">Mitochondrion</keyword>
<keyword id="KW-0539">Nucleus</keyword>
<keyword id="KW-1267">Proteomics identification</keyword>
<keyword id="KW-1185">Reference proteome</keyword>
<keyword id="KW-0687">Ribonucleoprotein</keyword>
<keyword id="KW-0689">Ribosomal protein</keyword>
<comment type="subunit">
    <text evidence="3 4">Component of the mitochondrial small ribosomal subunit (mt-SSU). Mature mammalian 55S mitochondrial ribosomes consist of a small (28S) and a large (39S) subunit. The 28S small subunit contains a 12S ribosomal RNA (12S mt-rRNA) and 30 different proteins. The 39S large subunit contains a 16S rRNA (16S mt-rRNA), a copy of mitochondrial valine transfer RNA (mt-tRNA(Val)), which plays an integral structural role, and 52 different proteins.</text>
</comment>
<comment type="interaction">
    <interactant intactId="EBI-5454898">
        <id>Q96BP2</id>
    </interactant>
    <interactant intactId="EBI-6165891">
        <id>Q14696</id>
        <label>MESD</label>
    </interactant>
    <organismsDiffer>false</organismsDiffer>
    <experiments>3</experiments>
</comment>
<comment type="interaction">
    <interactant intactId="EBI-5454898">
        <id>Q96BP2</id>
    </interactant>
    <interactant intactId="EBI-742426">
        <id>Q9H190</id>
        <label>SDCBP2</label>
    </interactant>
    <organismsDiffer>false</organismsDiffer>
    <experiments>3</experiments>
</comment>
<comment type="interaction">
    <interactant intactId="EBI-5454898">
        <id>Q96BP2</id>
    </interactant>
    <interactant intactId="EBI-6164309">
        <id>P04618</id>
        <label>rev</label>
    </interactant>
    <organismsDiffer>true</organismsDiffer>
    <experiments>3</experiments>
</comment>
<comment type="subcellular location">
    <subcellularLocation>
        <location evidence="3">Mitochondrion</location>
    </subcellularLocation>
    <subcellularLocation>
        <location evidence="2">Nucleus</location>
    </subcellularLocation>
</comment>
<comment type="similarity">
    <text evidence="6">Belongs to the mitochondrion-specific ribosomal protein mS37 family.</text>
</comment>
<name>CHCH1_HUMAN</name>
<protein>
    <recommendedName>
        <fullName evidence="5">Small ribosomal subunit protein mS37</fullName>
    </recommendedName>
    <alternativeName>
        <fullName>28S ribosomal protein S37, mitochondrial</fullName>
        <shortName>MRP-S37</shortName>
    </alternativeName>
    <alternativeName>
        <fullName>Coiled-coil-helix-coiled-coil-helix domain-containing protein 1</fullName>
    </alternativeName>
    <alternativeName>
        <fullName>Nuclear protein C2360</fullName>
    </alternativeName>
</protein>
<accession>Q96BP2</accession>
<evidence type="ECO:0000255" key="1">
    <source>
        <dbReference type="PROSITE-ProRule" id="PRU01150"/>
    </source>
</evidence>
<evidence type="ECO:0000269" key="2">
    <source>
    </source>
</evidence>
<evidence type="ECO:0000269" key="3">
    <source>
    </source>
</evidence>
<evidence type="ECO:0000269" key="4">
    <source>
    </source>
</evidence>
<evidence type="ECO:0000303" key="5">
    <source>
    </source>
</evidence>
<evidence type="ECO:0000305" key="6"/>
<evidence type="ECO:0007829" key="7">
    <source>
        <dbReference type="PDB" id="8QRN"/>
    </source>
</evidence>
<sequence length="118" mass="13475">MATPSLRGRLARFGNPRKPVLKPNKPLILANRVGERRREKGEATCITEMSVMMACWKQNEFRDDACRKEIQGFLDCAARAQEARKMRSIQETLGESGSLLPNKLNKLLQRFPNKPYLS</sequence>
<gene>
    <name type="primary">CHCHD1</name>
    <name type="synonym">C10orf34</name>
    <name type="synonym">MRPS37</name>
</gene>
<dbReference type="EMBL" id="BC015387">
    <property type="protein sequence ID" value="AAH15387.1"/>
    <property type="molecule type" value="mRNA"/>
</dbReference>
<dbReference type="EMBL" id="BC020852">
    <property type="protein sequence ID" value="AAH20852.1"/>
    <property type="molecule type" value="mRNA"/>
</dbReference>
<dbReference type="CCDS" id="CCDS7334.1"/>
<dbReference type="RefSeq" id="NP_976043.1">
    <property type="nucleotide sequence ID" value="NM_203298.3"/>
</dbReference>
<dbReference type="PDB" id="3J9M">
    <property type="method" value="EM"/>
    <property type="resolution" value="3.50 A"/>
    <property type="chains" value="A2=1-118"/>
</dbReference>
<dbReference type="PDB" id="6NU2">
    <property type="method" value="EM"/>
    <property type="resolution" value="3.90 A"/>
    <property type="chains" value="A2=2-117"/>
</dbReference>
<dbReference type="PDB" id="6NU3">
    <property type="method" value="EM"/>
    <property type="resolution" value="4.40 A"/>
    <property type="chains" value="A2=1-118"/>
</dbReference>
<dbReference type="PDB" id="6RW4">
    <property type="method" value="EM"/>
    <property type="resolution" value="2.97 A"/>
    <property type="chains" value="2=2-118"/>
</dbReference>
<dbReference type="PDB" id="6RW5">
    <property type="method" value="EM"/>
    <property type="resolution" value="3.14 A"/>
    <property type="chains" value="2=2-118"/>
</dbReference>
<dbReference type="PDB" id="6VLZ">
    <property type="method" value="EM"/>
    <property type="resolution" value="2.97 A"/>
    <property type="chains" value="A2=1-118"/>
</dbReference>
<dbReference type="PDB" id="6VMI">
    <property type="method" value="EM"/>
    <property type="resolution" value="2.96 A"/>
    <property type="chains" value="A2=1-118"/>
</dbReference>
<dbReference type="PDB" id="6ZM5">
    <property type="method" value="EM"/>
    <property type="resolution" value="2.89 A"/>
    <property type="chains" value="A2=2-118"/>
</dbReference>
<dbReference type="PDB" id="6ZM6">
    <property type="method" value="EM"/>
    <property type="resolution" value="2.59 A"/>
    <property type="chains" value="A2=2-118"/>
</dbReference>
<dbReference type="PDB" id="6ZS9">
    <property type="method" value="EM"/>
    <property type="resolution" value="4.00 A"/>
    <property type="chains" value="A2=1-118"/>
</dbReference>
<dbReference type="PDB" id="6ZSA">
    <property type="method" value="EM"/>
    <property type="resolution" value="4.00 A"/>
    <property type="chains" value="A2=1-118"/>
</dbReference>
<dbReference type="PDB" id="6ZSB">
    <property type="method" value="EM"/>
    <property type="resolution" value="4.50 A"/>
    <property type="chains" value="A2=1-118"/>
</dbReference>
<dbReference type="PDB" id="6ZSC">
    <property type="method" value="EM"/>
    <property type="resolution" value="3.50 A"/>
    <property type="chains" value="A2=1-118"/>
</dbReference>
<dbReference type="PDB" id="6ZSD">
    <property type="method" value="EM"/>
    <property type="resolution" value="3.70 A"/>
    <property type="chains" value="A2=1-118"/>
</dbReference>
<dbReference type="PDB" id="6ZSE">
    <property type="method" value="EM"/>
    <property type="resolution" value="5.00 A"/>
    <property type="chains" value="A2=1-118"/>
</dbReference>
<dbReference type="PDB" id="6ZSG">
    <property type="method" value="EM"/>
    <property type="resolution" value="4.00 A"/>
    <property type="chains" value="A2=1-118"/>
</dbReference>
<dbReference type="PDB" id="7A5F">
    <property type="method" value="EM"/>
    <property type="resolution" value="4.40 A"/>
    <property type="chains" value="c6=1-118"/>
</dbReference>
<dbReference type="PDB" id="7A5G">
    <property type="method" value="EM"/>
    <property type="resolution" value="4.33 A"/>
    <property type="chains" value="c6=1-118"/>
</dbReference>
<dbReference type="PDB" id="7A5I">
    <property type="method" value="EM"/>
    <property type="resolution" value="3.70 A"/>
    <property type="chains" value="c6=1-118"/>
</dbReference>
<dbReference type="PDB" id="7A5K">
    <property type="method" value="EM"/>
    <property type="resolution" value="3.70 A"/>
    <property type="chains" value="c6=1-118"/>
</dbReference>
<dbReference type="PDB" id="7L08">
    <property type="method" value="EM"/>
    <property type="resolution" value="3.49 A"/>
    <property type="chains" value="A2=1-118"/>
</dbReference>
<dbReference type="PDB" id="7OG4">
    <property type="method" value="EM"/>
    <property type="resolution" value="3.80 A"/>
    <property type="chains" value="A2=1-118"/>
</dbReference>
<dbReference type="PDB" id="7P2E">
    <property type="method" value="EM"/>
    <property type="resolution" value="2.40 A"/>
    <property type="chains" value="2=2-118"/>
</dbReference>
<dbReference type="PDB" id="7PO1">
    <property type="method" value="EM"/>
    <property type="resolution" value="2.92 A"/>
    <property type="chains" value="2=2-118"/>
</dbReference>
<dbReference type="PDB" id="7PO2">
    <property type="method" value="EM"/>
    <property type="resolution" value="3.09 A"/>
    <property type="chains" value="2=2-118"/>
</dbReference>
<dbReference type="PDB" id="7PO3">
    <property type="method" value="EM"/>
    <property type="resolution" value="2.92 A"/>
    <property type="chains" value="2=2-118"/>
</dbReference>
<dbReference type="PDB" id="7QI4">
    <property type="method" value="EM"/>
    <property type="resolution" value="2.21 A"/>
    <property type="chains" value="A2=1-118"/>
</dbReference>
<dbReference type="PDB" id="7QI5">
    <property type="method" value="EM"/>
    <property type="resolution" value="2.63 A"/>
    <property type="chains" value="A2=1-118"/>
</dbReference>
<dbReference type="PDB" id="7QI6">
    <property type="method" value="EM"/>
    <property type="resolution" value="2.98 A"/>
    <property type="chains" value="A2=1-118"/>
</dbReference>
<dbReference type="PDB" id="8ANY">
    <property type="method" value="EM"/>
    <property type="resolution" value="2.85 A"/>
    <property type="chains" value="A2=1-118"/>
</dbReference>
<dbReference type="PDB" id="8K2A">
    <property type="method" value="EM"/>
    <property type="resolution" value="2.90 A"/>
    <property type="chains" value="Sm=1-118"/>
</dbReference>
<dbReference type="PDB" id="8OIR">
    <property type="method" value="EM"/>
    <property type="resolution" value="3.10 A"/>
    <property type="chains" value="Ac=1-118"/>
</dbReference>
<dbReference type="PDB" id="8OIS">
    <property type="method" value="EM"/>
    <property type="resolution" value="3.00 A"/>
    <property type="chains" value="Ac=1-118"/>
</dbReference>
<dbReference type="PDB" id="8QRM">
    <property type="method" value="EM"/>
    <property type="resolution" value="3.05 A"/>
    <property type="chains" value="2=2-118"/>
</dbReference>
<dbReference type="PDB" id="8QRN">
    <property type="method" value="EM"/>
    <property type="resolution" value="2.98 A"/>
    <property type="chains" value="2=2-118"/>
</dbReference>
<dbReference type="PDB" id="8RRI">
    <property type="method" value="EM"/>
    <property type="resolution" value="2.40 A"/>
    <property type="chains" value="A2=2-118"/>
</dbReference>
<dbReference type="PDB" id="8XT0">
    <property type="method" value="EM"/>
    <property type="resolution" value="3.20 A"/>
    <property type="chains" value="Sm=1-118"/>
</dbReference>
<dbReference type="PDB" id="8XT2">
    <property type="method" value="EM"/>
    <property type="resolution" value="3.30 A"/>
    <property type="chains" value="Sm=1-118"/>
</dbReference>
<dbReference type="PDBsum" id="3J9M"/>
<dbReference type="PDBsum" id="6NU2"/>
<dbReference type="PDBsum" id="6NU3"/>
<dbReference type="PDBsum" id="6RW4"/>
<dbReference type="PDBsum" id="6RW5"/>
<dbReference type="PDBsum" id="6VLZ"/>
<dbReference type="PDBsum" id="6VMI"/>
<dbReference type="PDBsum" id="6ZM5"/>
<dbReference type="PDBsum" id="6ZM6"/>
<dbReference type="PDBsum" id="6ZS9"/>
<dbReference type="PDBsum" id="6ZSA"/>
<dbReference type="PDBsum" id="6ZSB"/>
<dbReference type="PDBsum" id="6ZSC"/>
<dbReference type="PDBsum" id="6ZSD"/>
<dbReference type="PDBsum" id="6ZSE"/>
<dbReference type="PDBsum" id="6ZSG"/>
<dbReference type="PDBsum" id="7A5F"/>
<dbReference type="PDBsum" id="7A5G"/>
<dbReference type="PDBsum" id="7A5I"/>
<dbReference type="PDBsum" id="7A5K"/>
<dbReference type="PDBsum" id="7L08"/>
<dbReference type="PDBsum" id="7OG4"/>
<dbReference type="PDBsum" id="7P2E"/>
<dbReference type="PDBsum" id="7PO1"/>
<dbReference type="PDBsum" id="7PO2"/>
<dbReference type="PDBsum" id="7PO3"/>
<dbReference type="PDBsum" id="7QI4"/>
<dbReference type="PDBsum" id="7QI5"/>
<dbReference type="PDBsum" id="7QI6"/>
<dbReference type="PDBsum" id="8ANY"/>
<dbReference type="PDBsum" id="8K2A"/>
<dbReference type="PDBsum" id="8OIR"/>
<dbReference type="PDBsum" id="8OIS"/>
<dbReference type="PDBsum" id="8QRM"/>
<dbReference type="PDBsum" id="8QRN"/>
<dbReference type="PDBsum" id="8RRI"/>
<dbReference type="PDBsum" id="8XT0"/>
<dbReference type="PDBsum" id="8XT2"/>
<dbReference type="EMDB" id="EMD-0514"/>
<dbReference type="EMDB" id="EMD-0515"/>
<dbReference type="EMDB" id="EMD-10021"/>
<dbReference type="EMDB" id="EMD-10022"/>
<dbReference type="EMDB" id="EMD-11278"/>
<dbReference type="EMDB" id="EMD-11279"/>
<dbReference type="EMDB" id="EMD-11390"/>
<dbReference type="EMDB" id="EMD-11391"/>
<dbReference type="EMDB" id="EMD-11392"/>
<dbReference type="EMDB" id="EMD-11393"/>
<dbReference type="EMDB" id="EMD-11394"/>
<dbReference type="EMDB" id="EMD-11395"/>
<dbReference type="EMDB" id="EMD-11397"/>
<dbReference type="EMDB" id="EMD-11641"/>
<dbReference type="EMDB" id="EMD-11642"/>
<dbReference type="EMDB" id="EMD-11644"/>
<dbReference type="EMDB" id="EMD-11646"/>
<dbReference type="EMDB" id="EMD-12877"/>
<dbReference type="EMDB" id="EMD-13170"/>
<dbReference type="EMDB" id="EMD-13559"/>
<dbReference type="EMDB" id="EMD-13560"/>
<dbReference type="EMDB" id="EMD-13561"/>
<dbReference type="EMDB" id="EMD-13980"/>
<dbReference type="EMDB" id="EMD-13981"/>
<dbReference type="EMDB" id="EMD-13982"/>
<dbReference type="EMDB" id="EMD-15544"/>
<dbReference type="EMDB" id="EMD-16897"/>
<dbReference type="EMDB" id="EMD-16898"/>
<dbReference type="EMDB" id="EMD-19460"/>
<dbReference type="EMDB" id="EMD-21233"/>
<dbReference type="EMDB" id="EMD-21242"/>
<dbReference type="EMDB" id="EMD-23096"/>
<dbReference type="EMDB" id="EMD-36836"/>
<dbReference type="EMDB" id="EMD-38632"/>
<dbReference type="EMDB" id="EMD-38634"/>
<dbReference type="SMR" id="Q96BP2"/>
<dbReference type="BioGRID" id="125612">
    <property type="interactions" value="245"/>
</dbReference>
<dbReference type="ComplexPortal" id="CPX-5225">
    <property type="entry name" value="28S mitochondrial small ribosomal subunit"/>
</dbReference>
<dbReference type="FunCoup" id="Q96BP2">
    <property type="interactions" value="1980"/>
</dbReference>
<dbReference type="IntAct" id="Q96BP2">
    <property type="interactions" value="18"/>
</dbReference>
<dbReference type="MINT" id="Q96BP2"/>
<dbReference type="STRING" id="9606.ENSP00000361923"/>
<dbReference type="GlyGen" id="Q96BP2">
    <property type="glycosylation" value="2 sites, 1 O-linked glycan (1 site)"/>
</dbReference>
<dbReference type="iPTMnet" id="Q96BP2"/>
<dbReference type="PhosphoSitePlus" id="Q96BP2"/>
<dbReference type="BioMuta" id="CHCHD1"/>
<dbReference type="DMDM" id="62510504"/>
<dbReference type="jPOST" id="Q96BP2"/>
<dbReference type="MassIVE" id="Q96BP2"/>
<dbReference type="PaxDb" id="9606-ENSP00000361923"/>
<dbReference type="PeptideAtlas" id="Q96BP2"/>
<dbReference type="ProteomicsDB" id="76095"/>
<dbReference type="Pumba" id="Q96BP2"/>
<dbReference type="Antibodypedia" id="45414">
    <property type="antibodies" value="74 antibodies from 23 providers"/>
</dbReference>
<dbReference type="DNASU" id="118487"/>
<dbReference type="Ensembl" id="ENST00000372833.6">
    <property type="protein sequence ID" value="ENSP00000361923.5"/>
    <property type="gene ID" value="ENSG00000172586.8"/>
</dbReference>
<dbReference type="GeneID" id="118487"/>
<dbReference type="KEGG" id="hsa:118487"/>
<dbReference type="MANE-Select" id="ENST00000372833.6">
    <property type="protein sequence ID" value="ENSP00000361923.5"/>
    <property type="RefSeq nucleotide sequence ID" value="NM_203298.3"/>
    <property type="RefSeq protein sequence ID" value="NP_976043.1"/>
</dbReference>
<dbReference type="UCSC" id="uc001jvc.5">
    <property type="organism name" value="human"/>
</dbReference>
<dbReference type="AGR" id="HGNC:23518"/>
<dbReference type="CTD" id="118487"/>
<dbReference type="DisGeNET" id="118487"/>
<dbReference type="GeneCards" id="CHCHD1"/>
<dbReference type="HGNC" id="HGNC:23518">
    <property type="gene designation" value="CHCHD1"/>
</dbReference>
<dbReference type="HPA" id="ENSG00000172586">
    <property type="expression patterns" value="Low tissue specificity"/>
</dbReference>
<dbReference type="MIM" id="608842">
    <property type="type" value="gene"/>
</dbReference>
<dbReference type="neXtProt" id="NX_Q96BP2"/>
<dbReference type="OpenTargets" id="ENSG00000172586"/>
<dbReference type="PharmGKB" id="PA134964437"/>
<dbReference type="VEuPathDB" id="HostDB:ENSG00000172586"/>
<dbReference type="eggNOG" id="KOG4695">
    <property type="taxonomic scope" value="Eukaryota"/>
</dbReference>
<dbReference type="GeneTree" id="ENSGT00390000007683"/>
<dbReference type="HOGENOM" id="CLU_146244_1_0_1"/>
<dbReference type="InParanoid" id="Q96BP2"/>
<dbReference type="OMA" id="ATCLTEM"/>
<dbReference type="OrthoDB" id="5825849at2759"/>
<dbReference type="PAN-GO" id="Q96BP2">
    <property type="GO annotations" value="2 GO annotations based on evolutionary models"/>
</dbReference>
<dbReference type="PhylomeDB" id="Q96BP2"/>
<dbReference type="TreeFam" id="TF314650"/>
<dbReference type="PathwayCommons" id="Q96BP2"/>
<dbReference type="Reactome" id="R-HSA-5368286">
    <property type="pathway name" value="Mitochondrial translation initiation"/>
</dbReference>
<dbReference type="Reactome" id="R-HSA-5389840">
    <property type="pathway name" value="Mitochondrial translation elongation"/>
</dbReference>
<dbReference type="Reactome" id="R-HSA-5419276">
    <property type="pathway name" value="Mitochondrial translation termination"/>
</dbReference>
<dbReference type="SignaLink" id="Q96BP2"/>
<dbReference type="SIGNOR" id="Q96BP2"/>
<dbReference type="BioGRID-ORCS" id="118487">
    <property type="hits" value="450 hits in 1164 CRISPR screens"/>
</dbReference>
<dbReference type="GenomeRNAi" id="118487"/>
<dbReference type="Pharos" id="Q96BP2">
    <property type="development level" value="Tbio"/>
</dbReference>
<dbReference type="PRO" id="PR:Q96BP2"/>
<dbReference type="Proteomes" id="UP000005640">
    <property type="component" value="Chromosome 10"/>
</dbReference>
<dbReference type="RNAct" id="Q96BP2">
    <property type="molecule type" value="protein"/>
</dbReference>
<dbReference type="Bgee" id="ENSG00000172586">
    <property type="expression patterns" value="Expressed in mucosa of transverse colon and 173 other cell types or tissues"/>
</dbReference>
<dbReference type="ExpressionAtlas" id="Q96BP2">
    <property type="expression patterns" value="baseline and differential"/>
</dbReference>
<dbReference type="GO" id="GO:0005829">
    <property type="term" value="C:cytosol"/>
    <property type="evidence" value="ECO:0000314"/>
    <property type="project" value="HPA"/>
</dbReference>
<dbReference type="GO" id="GO:0001650">
    <property type="term" value="C:fibrillar center"/>
    <property type="evidence" value="ECO:0000314"/>
    <property type="project" value="HPA"/>
</dbReference>
<dbReference type="GO" id="GO:0005743">
    <property type="term" value="C:mitochondrial inner membrane"/>
    <property type="evidence" value="ECO:0000304"/>
    <property type="project" value="Reactome"/>
</dbReference>
<dbReference type="GO" id="GO:0005763">
    <property type="term" value="C:mitochondrial small ribosomal subunit"/>
    <property type="evidence" value="ECO:0000303"/>
    <property type="project" value="ComplexPortal"/>
</dbReference>
<dbReference type="GO" id="GO:0005739">
    <property type="term" value="C:mitochondrion"/>
    <property type="evidence" value="ECO:0000314"/>
    <property type="project" value="HPA"/>
</dbReference>
<dbReference type="GO" id="GO:0005654">
    <property type="term" value="C:nucleoplasm"/>
    <property type="evidence" value="ECO:0000314"/>
    <property type="project" value="HPA"/>
</dbReference>
<dbReference type="GO" id="GO:0003723">
    <property type="term" value="F:RNA binding"/>
    <property type="evidence" value="ECO:0007005"/>
    <property type="project" value="UniProtKB"/>
</dbReference>
<dbReference type="GO" id="GO:0032543">
    <property type="term" value="P:mitochondrial translation"/>
    <property type="evidence" value="ECO:0000303"/>
    <property type="project" value="ComplexPortal"/>
</dbReference>
<dbReference type="InterPro" id="IPR010625">
    <property type="entry name" value="CHCH"/>
</dbReference>
<dbReference type="InterPro" id="IPR009069">
    <property type="entry name" value="Cys_alpha_HP_mot_SF"/>
</dbReference>
<dbReference type="InterPro" id="IPR033620">
    <property type="entry name" value="Ribosomal_mS37_met"/>
</dbReference>
<dbReference type="PANTHER" id="PTHR31278">
    <property type="entry name" value="CHCHD1"/>
    <property type="match status" value="1"/>
</dbReference>
<dbReference type="PANTHER" id="PTHR31278:SF2">
    <property type="entry name" value="SMALL RIBOSOMAL SUBUNIT PROTEIN MS37"/>
    <property type="match status" value="1"/>
</dbReference>
<dbReference type="Pfam" id="PF06747">
    <property type="entry name" value="CHCH"/>
    <property type="match status" value="1"/>
</dbReference>
<dbReference type="SUPFAM" id="SSF47072">
    <property type="entry name" value="Cysteine alpha-hairpin motif"/>
    <property type="match status" value="1"/>
</dbReference>
<dbReference type="PROSITE" id="PS51808">
    <property type="entry name" value="CHCH"/>
    <property type="match status" value="1"/>
</dbReference>
<feature type="chain" id="PRO_0000129158" description="Small ribosomal subunit protein mS37">
    <location>
        <begin position="1"/>
        <end position="118"/>
    </location>
</feature>
<feature type="domain" description="CHCH" evidence="1">
    <location>
        <begin position="42"/>
        <end position="84"/>
    </location>
</feature>
<feature type="short sequence motif" description="Cx9C motif 1" evidence="1">
    <location>
        <begin position="45"/>
        <end position="55"/>
    </location>
</feature>
<feature type="short sequence motif" description="Cx9C motif 2" evidence="1">
    <location>
        <begin position="66"/>
        <end position="76"/>
    </location>
</feature>
<feature type="disulfide bond" evidence="1">
    <location>
        <begin position="45"/>
        <end position="76"/>
    </location>
</feature>
<feature type="disulfide bond" evidence="1">
    <location>
        <begin position="55"/>
        <end position="66"/>
    </location>
</feature>
<feature type="helix" evidence="7">
    <location>
        <begin position="47"/>
        <end position="58"/>
    </location>
</feature>
<feature type="turn" evidence="7">
    <location>
        <begin position="63"/>
        <end position="65"/>
    </location>
</feature>
<feature type="helix" evidence="7">
    <location>
        <begin position="67"/>
        <end position="93"/>
    </location>
</feature>
<feature type="helix" evidence="7">
    <location>
        <begin position="101"/>
        <end position="108"/>
    </location>
</feature>
<organism>
    <name type="scientific">Homo sapiens</name>
    <name type="common">Human</name>
    <dbReference type="NCBI Taxonomy" id="9606"/>
    <lineage>
        <taxon>Eukaryota</taxon>
        <taxon>Metazoa</taxon>
        <taxon>Chordata</taxon>
        <taxon>Craniata</taxon>
        <taxon>Vertebrata</taxon>
        <taxon>Euteleostomi</taxon>
        <taxon>Mammalia</taxon>
        <taxon>Eutheria</taxon>
        <taxon>Euarchontoglires</taxon>
        <taxon>Primates</taxon>
        <taxon>Haplorrhini</taxon>
        <taxon>Catarrhini</taxon>
        <taxon>Hominidae</taxon>
        <taxon>Homo</taxon>
    </lineage>
</organism>